<comment type="function">
    <text evidence="1">Catalyzes the isomerization of sedoheptulose 7-phosphate in D-glycero-D-manno-heptose 7-phosphate.</text>
</comment>
<comment type="catalytic activity">
    <reaction evidence="1">
        <text>2 D-sedoheptulose 7-phosphate = D-glycero-alpha-D-manno-heptose 7-phosphate + D-glycero-beta-D-manno-heptose 7-phosphate</text>
        <dbReference type="Rhea" id="RHEA:27489"/>
        <dbReference type="ChEBI" id="CHEBI:57483"/>
        <dbReference type="ChEBI" id="CHEBI:60203"/>
        <dbReference type="ChEBI" id="CHEBI:60204"/>
        <dbReference type="EC" id="5.3.1.28"/>
    </reaction>
</comment>
<comment type="cofactor">
    <cofactor evidence="1">
        <name>Zn(2+)</name>
        <dbReference type="ChEBI" id="CHEBI:29105"/>
    </cofactor>
    <text evidence="1">Binds 1 zinc ion per subunit.</text>
</comment>
<comment type="pathway">
    <text evidence="1">Carbohydrate biosynthesis; D-glycero-D-manno-heptose 7-phosphate biosynthesis; D-glycero-alpha-D-manno-heptose 7-phosphate and D-glycero-beta-D-manno-heptose 7-phosphate from sedoheptulose 7-phosphate: step 1/1.</text>
</comment>
<comment type="subcellular location">
    <subcellularLocation>
        <location evidence="1">Cytoplasm</location>
    </subcellularLocation>
</comment>
<comment type="miscellaneous">
    <text evidence="1">The reaction produces a racemic mixture of D-glycero-alpha-D-manno-heptose 7-phosphate and D-glycero-beta-D-manno-heptose 7-phosphate.</text>
</comment>
<comment type="similarity">
    <text evidence="1">Belongs to the SIS family. GmhA subfamily.</text>
</comment>
<organism>
    <name type="scientific">Leptospira biflexa serovar Patoc (strain Patoc 1 / Ames)</name>
    <dbReference type="NCBI Taxonomy" id="355278"/>
    <lineage>
        <taxon>Bacteria</taxon>
        <taxon>Pseudomonadati</taxon>
        <taxon>Spirochaetota</taxon>
        <taxon>Spirochaetia</taxon>
        <taxon>Leptospirales</taxon>
        <taxon>Leptospiraceae</taxon>
        <taxon>Leptospira</taxon>
    </lineage>
</organism>
<evidence type="ECO:0000255" key="1">
    <source>
        <dbReference type="HAMAP-Rule" id="MF_00067"/>
    </source>
</evidence>
<proteinExistence type="inferred from homology"/>
<dbReference type="EC" id="5.3.1.28" evidence="1"/>
<dbReference type="EMBL" id="CP000777">
    <property type="protein sequence ID" value="ABZ94079.1"/>
    <property type="molecule type" value="Genomic_DNA"/>
</dbReference>
<dbReference type="RefSeq" id="WP_012388606.1">
    <property type="nucleotide sequence ID" value="NC_010842.1"/>
</dbReference>
<dbReference type="SMR" id="B0SHL8"/>
<dbReference type="KEGG" id="lbf:LBF_1571"/>
<dbReference type="HOGENOM" id="CLU_080999_4_0_12"/>
<dbReference type="UniPathway" id="UPA00041">
    <property type="reaction ID" value="UER00436"/>
</dbReference>
<dbReference type="GO" id="GO:0005737">
    <property type="term" value="C:cytoplasm"/>
    <property type="evidence" value="ECO:0007669"/>
    <property type="project" value="UniProtKB-SubCell"/>
</dbReference>
<dbReference type="GO" id="GO:0097367">
    <property type="term" value="F:carbohydrate derivative binding"/>
    <property type="evidence" value="ECO:0007669"/>
    <property type="project" value="InterPro"/>
</dbReference>
<dbReference type="GO" id="GO:0008968">
    <property type="term" value="F:D-sedoheptulose 7-phosphate isomerase activity"/>
    <property type="evidence" value="ECO:0007669"/>
    <property type="project" value="UniProtKB-UniRule"/>
</dbReference>
<dbReference type="GO" id="GO:0008270">
    <property type="term" value="F:zinc ion binding"/>
    <property type="evidence" value="ECO:0007669"/>
    <property type="project" value="UniProtKB-UniRule"/>
</dbReference>
<dbReference type="GO" id="GO:0005975">
    <property type="term" value="P:carbohydrate metabolic process"/>
    <property type="evidence" value="ECO:0007669"/>
    <property type="project" value="UniProtKB-UniRule"/>
</dbReference>
<dbReference type="GO" id="GO:2001061">
    <property type="term" value="P:D-glycero-D-manno-heptose 7-phosphate biosynthetic process"/>
    <property type="evidence" value="ECO:0007669"/>
    <property type="project" value="UniProtKB-UniPathway"/>
</dbReference>
<dbReference type="CDD" id="cd05006">
    <property type="entry name" value="SIS_GmhA"/>
    <property type="match status" value="1"/>
</dbReference>
<dbReference type="Gene3D" id="3.40.50.10490">
    <property type="entry name" value="Glucose-6-phosphate isomerase like protein, domain 1"/>
    <property type="match status" value="1"/>
</dbReference>
<dbReference type="HAMAP" id="MF_00067">
    <property type="entry name" value="GmhA"/>
    <property type="match status" value="1"/>
</dbReference>
<dbReference type="InterPro" id="IPR035461">
    <property type="entry name" value="GmhA/DiaA"/>
</dbReference>
<dbReference type="InterPro" id="IPR004515">
    <property type="entry name" value="Phosphoheptose_Isoase"/>
</dbReference>
<dbReference type="InterPro" id="IPR001347">
    <property type="entry name" value="SIS_dom"/>
</dbReference>
<dbReference type="InterPro" id="IPR046348">
    <property type="entry name" value="SIS_dom_sf"/>
</dbReference>
<dbReference type="InterPro" id="IPR050099">
    <property type="entry name" value="SIS_GmhA/DiaA_subfam"/>
</dbReference>
<dbReference type="PANTHER" id="PTHR30390:SF6">
    <property type="entry name" value="DNAA INITIATOR-ASSOCIATING PROTEIN DIAA"/>
    <property type="match status" value="1"/>
</dbReference>
<dbReference type="PANTHER" id="PTHR30390">
    <property type="entry name" value="SEDOHEPTULOSE 7-PHOSPHATE ISOMERASE / DNAA INITIATOR-ASSOCIATING FACTOR FOR REPLICATION INITIATION"/>
    <property type="match status" value="1"/>
</dbReference>
<dbReference type="Pfam" id="PF13580">
    <property type="entry name" value="SIS_2"/>
    <property type="match status" value="1"/>
</dbReference>
<dbReference type="SUPFAM" id="SSF53697">
    <property type="entry name" value="SIS domain"/>
    <property type="match status" value="1"/>
</dbReference>
<dbReference type="PROSITE" id="PS51464">
    <property type="entry name" value="SIS"/>
    <property type="match status" value="1"/>
</dbReference>
<name>GMHA_LEPBA</name>
<protein>
    <recommendedName>
        <fullName evidence="1">Phosphoheptose isomerase</fullName>
        <ecNumber evidence="1">5.3.1.28</ecNumber>
    </recommendedName>
    <alternativeName>
        <fullName evidence="1">Sedoheptulose 7-phosphate isomerase</fullName>
    </alternativeName>
</protein>
<sequence>MEHDTLIQSQIEDSIRVKAQLLPSLLPNIKAAGKVLVDSLKGDGILYFAGNGGSSCDASHIAAELVIRYKSGNERKAIPAIALNSDQAVLTACANDYGYEFLFQRQLQAFGKSKDVFIGLTTSGNSKNIILAVEEAKKNGMKVVLLLGGDGGKLKGKADVEIIIPSSVTARIQESHILIGHILCSIIEKELFGLD</sequence>
<gene>
    <name evidence="1" type="primary">gmhA</name>
    <name type="ordered locus">LBF_1571</name>
</gene>
<reference key="1">
    <citation type="journal article" date="2008" name="PLoS ONE">
        <title>Genome sequence of the saprophyte Leptospira biflexa provides insights into the evolution of Leptospira and the pathogenesis of leptospirosis.</title>
        <authorList>
            <person name="Picardeau M."/>
            <person name="Bulach D.M."/>
            <person name="Bouchier C."/>
            <person name="Zuerner R.L."/>
            <person name="Zidane N."/>
            <person name="Wilson P.J."/>
            <person name="Creno S."/>
            <person name="Kuczek E.S."/>
            <person name="Bommezzadri S."/>
            <person name="Davis J.C."/>
            <person name="McGrath A."/>
            <person name="Johnson M.J."/>
            <person name="Boursaux-Eude C."/>
            <person name="Seemann T."/>
            <person name="Rouy Z."/>
            <person name="Coppel R.L."/>
            <person name="Rood J.I."/>
            <person name="Lajus A."/>
            <person name="Davies J.K."/>
            <person name="Medigue C."/>
            <person name="Adler B."/>
        </authorList>
    </citation>
    <scope>NUCLEOTIDE SEQUENCE [LARGE SCALE GENOMIC DNA]</scope>
    <source>
        <strain>Patoc 1 / Ames</strain>
    </source>
</reference>
<feature type="chain" id="PRO_1000092279" description="Phosphoheptose isomerase">
    <location>
        <begin position="1"/>
        <end position="195"/>
    </location>
</feature>
<feature type="domain" description="SIS" evidence="1">
    <location>
        <begin position="36"/>
        <end position="195"/>
    </location>
</feature>
<feature type="binding site" evidence="1">
    <location>
        <begin position="51"/>
        <end position="53"/>
    </location>
    <ligand>
        <name>substrate</name>
    </ligand>
</feature>
<feature type="binding site" evidence="1">
    <location>
        <position position="60"/>
    </location>
    <ligand>
        <name>Zn(2+)</name>
        <dbReference type="ChEBI" id="CHEBI:29105"/>
    </ligand>
</feature>
<feature type="binding site" evidence="1">
    <location>
        <position position="64"/>
    </location>
    <ligand>
        <name>substrate</name>
    </ligand>
</feature>
<feature type="binding site" evidence="1">
    <location>
        <position position="64"/>
    </location>
    <ligand>
        <name>Zn(2+)</name>
        <dbReference type="ChEBI" id="CHEBI:29105"/>
    </ligand>
</feature>
<feature type="binding site" evidence="1">
    <location>
        <begin position="95"/>
        <end position="96"/>
    </location>
    <ligand>
        <name>substrate</name>
    </ligand>
</feature>
<feature type="binding site" evidence="1">
    <location>
        <begin position="121"/>
        <end position="123"/>
    </location>
    <ligand>
        <name>substrate</name>
    </ligand>
</feature>
<feature type="binding site" evidence="1">
    <location>
        <position position="126"/>
    </location>
    <ligand>
        <name>substrate</name>
    </ligand>
</feature>
<feature type="binding site" evidence="1">
    <location>
        <position position="173"/>
    </location>
    <ligand>
        <name>substrate</name>
    </ligand>
</feature>
<feature type="binding site" evidence="1">
    <location>
        <position position="173"/>
    </location>
    <ligand>
        <name>Zn(2+)</name>
        <dbReference type="ChEBI" id="CHEBI:29105"/>
    </ligand>
</feature>
<feature type="binding site" evidence="1">
    <location>
        <position position="181"/>
    </location>
    <ligand>
        <name>Zn(2+)</name>
        <dbReference type="ChEBI" id="CHEBI:29105"/>
    </ligand>
</feature>
<keyword id="KW-0119">Carbohydrate metabolism</keyword>
<keyword id="KW-0963">Cytoplasm</keyword>
<keyword id="KW-0413">Isomerase</keyword>
<keyword id="KW-0479">Metal-binding</keyword>
<keyword id="KW-0862">Zinc</keyword>
<accession>B0SHL8</accession>